<gene>
    <name evidence="1" type="primary">rpsO</name>
    <name type="ordered locus">CMS1185</name>
</gene>
<keyword id="KW-0687">Ribonucleoprotein</keyword>
<keyword id="KW-0689">Ribosomal protein</keyword>
<keyword id="KW-0694">RNA-binding</keyword>
<keyword id="KW-0699">rRNA-binding</keyword>
<name>RS15_CLASE</name>
<organism>
    <name type="scientific">Clavibacter sepedonicus</name>
    <name type="common">Clavibacter michiganensis subsp. sepedonicus</name>
    <dbReference type="NCBI Taxonomy" id="31964"/>
    <lineage>
        <taxon>Bacteria</taxon>
        <taxon>Bacillati</taxon>
        <taxon>Actinomycetota</taxon>
        <taxon>Actinomycetes</taxon>
        <taxon>Micrococcales</taxon>
        <taxon>Microbacteriaceae</taxon>
        <taxon>Clavibacter</taxon>
    </lineage>
</organism>
<sequence length="89" mass="10186">MALEADVKKAIIDEYATHPGDTGSPEVQIALLTKRITGLTEHLKEHKHDHHTRRGLLLLVGQRRRLLGYLSNVDIERYRALIARLGIRR</sequence>
<dbReference type="EMBL" id="AM849034">
    <property type="protein sequence ID" value="CAQ01300.1"/>
    <property type="molecule type" value="Genomic_DNA"/>
</dbReference>
<dbReference type="RefSeq" id="WP_012038735.1">
    <property type="nucleotide sequence ID" value="NZ_MZMN01000003.1"/>
</dbReference>
<dbReference type="SMR" id="B0RGW6"/>
<dbReference type="STRING" id="31964.CMS1185"/>
<dbReference type="GeneID" id="92983793"/>
<dbReference type="KEGG" id="cms:CMS1185"/>
<dbReference type="eggNOG" id="COG0184">
    <property type="taxonomic scope" value="Bacteria"/>
</dbReference>
<dbReference type="HOGENOM" id="CLU_148518_0_0_11"/>
<dbReference type="OrthoDB" id="9799262at2"/>
<dbReference type="Proteomes" id="UP000001318">
    <property type="component" value="Chromosome"/>
</dbReference>
<dbReference type="GO" id="GO:0022627">
    <property type="term" value="C:cytosolic small ribosomal subunit"/>
    <property type="evidence" value="ECO:0007669"/>
    <property type="project" value="TreeGrafter"/>
</dbReference>
<dbReference type="GO" id="GO:0019843">
    <property type="term" value="F:rRNA binding"/>
    <property type="evidence" value="ECO:0007669"/>
    <property type="project" value="UniProtKB-UniRule"/>
</dbReference>
<dbReference type="GO" id="GO:0003735">
    <property type="term" value="F:structural constituent of ribosome"/>
    <property type="evidence" value="ECO:0007669"/>
    <property type="project" value="InterPro"/>
</dbReference>
<dbReference type="GO" id="GO:0006412">
    <property type="term" value="P:translation"/>
    <property type="evidence" value="ECO:0007669"/>
    <property type="project" value="UniProtKB-UniRule"/>
</dbReference>
<dbReference type="CDD" id="cd00353">
    <property type="entry name" value="Ribosomal_S15p_S13e"/>
    <property type="match status" value="1"/>
</dbReference>
<dbReference type="FunFam" id="1.10.287.10:FF:000002">
    <property type="entry name" value="30S ribosomal protein S15"/>
    <property type="match status" value="1"/>
</dbReference>
<dbReference type="Gene3D" id="6.10.250.3130">
    <property type="match status" value="1"/>
</dbReference>
<dbReference type="Gene3D" id="1.10.287.10">
    <property type="entry name" value="S15/NS1, RNA-binding"/>
    <property type="match status" value="1"/>
</dbReference>
<dbReference type="HAMAP" id="MF_01343_B">
    <property type="entry name" value="Ribosomal_uS15_B"/>
    <property type="match status" value="1"/>
</dbReference>
<dbReference type="InterPro" id="IPR000589">
    <property type="entry name" value="Ribosomal_uS15"/>
</dbReference>
<dbReference type="InterPro" id="IPR005290">
    <property type="entry name" value="Ribosomal_uS15_bac-type"/>
</dbReference>
<dbReference type="InterPro" id="IPR009068">
    <property type="entry name" value="uS15_NS1_RNA-bd_sf"/>
</dbReference>
<dbReference type="NCBIfam" id="TIGR00952">
    <property type="entry name" value="S15_bact"/>
    <property type="match status" value="1"/>
</dbReference>
<dbReference type="PANTHER" id="PTHR23321">
    <property type="entry name" value="RIBOSOMAL PROTEIN S15, BACTERIAL AND ORGANELLAR"/>
    <property type="match status" value="1"/>
</dbReference>
<dbReference type="PANTHER" id="PTHR23321:SF26">
    <property type="entry name" value="SMALL RIBOSOMAL SUBUNIT PROTEIN US15M"/>
    <property type="match status" value="1"/>
</dbReference>
<dbReference type="Pfam" id="PF00312">
    <property type="entry name" value="Ribosomal_S15"/>
    <property type="match status" value="1"/>
</dbReference>
<dbReference type="SMART" id="SM01387">
    <property type="entry name" value="Ribosomal_S15"/>
    <property type="match status" value="1"/>
</dbReference>
<dbReference type="SUPFAM" id="SSF47060">
    <property type="entry name" value="S15/NS1 RNA-binding domain"/>
    <property type="match status" value="1"/>
</dbReference>
<dbReference type="PROSITE" id="PS00362">
    <property type="entry name" value="RIBOSOMAL_S15"/>
    <property type="match status" value="1"/>
</dbReference>
<reference key="1">
    <citation type="journal article" date="2008" name="J. Bacteriol.">
        <title>Genome of the actinomycete plant pathogen Clavibacter michiganensis subsp. sepedonicus suggests recent niche adaptation.</title>
        <authorList>
            <person name="Bentley S.D."/>
            <person name="Corton C."/>
            <person name="Brown S.E."/>
            <person name="Barron A."/>
            <person name="Clark L."/>
            <person name="Doggett J."/>
            <person name="Harris B."/>
            <person name="Ormond D."/>
            <person name="Quail M.A."/>
            <person name="May G."/>
            <person name="Francis D."/>
            <person name="Knudson D."/>
            <person name="Parkhill J."/>
            <person name="Ishimaru C.A."/>
        </authorList>
    </citation>
    <scope>NUCLEOTIDE SEQUENCE [LARGE SCALE GENOMIC DNA]</scope>
    <source>
        <strain>ATCC 33113 / DSM 20744 / JCM 9667 / LMG 2889 / ICMP 2535 / C-1</strain>
    </source>
</reference>
<proteinExistence type="inferred from homology"/>
<feature type="chain" id="PRO_1000086795" description="Small ribosomal subunit protein uS15">
    <location>
        <begin position="1"/>
        <end position="89"/>
    </location>
</feature>
<accession>B0RGW6</accession>
<evidence type="ECO:0000255" key="1">
    <source>
        <dbReference type="HAMAP-Rule" id="MF_01343"/>
    </source>
</evidence>
<evidence type="ECO:0000305" key="2"/>
<protein>
    <recommendedName>
        <fullName evidence="1">Small ribosomal subunit protein uS15</fullName>
    </recommendedName>
    <alternativeName>
        <fullName evidence="2">30S ribosomal protein S15</fullName>
    </alternativeName>
</protein>
<comment type="function">
    <text evidence="1">One of the primary rRNA binding proteins, it binds directly to 16S rRNA where it helps nucleate assembly of the platform of the 30S subunit by binding and bridging several RNA helices of the 16S rRNA.</text>
</comment>
<comment type="function">
    <text evidence="1">Forms an intersubunit bridge (bridge B4) with the 23S rRNA of the 50S subunit in the ribosome.</text>
</comment>
<comment type="subunit">
    <text evidence="1">Part of the 30S ribosomal subunit. Forms a bridge to the 50S subunit in the 70S ribosome, contacting the 23S rRNA.</text>
</comment>
<comment type="similarity">
    <text evidence="1">Belongs to the universal ribosomal protein uS15 family.</text>
</comment>